<organism>
    <name type="scientific">Karelsulcia muelleri (strain GWSS)</name>
    <name type="common">Sulcia muelleri</name>
    <dbReference type="NCBI Taxonomy" id="444179"/>
    <lineage>
        <taxon>Bacteria</taxon>
        <taxon>Pseudomonadati</taxon>
        <taxon>Bacteroidota</taxon>
        <taxon>Flavobacteriia</taxon>
        <taxon>Flavobacteriales</taxon>
        <taxon>Candidatus Karelsulcia</taxon>
    </lineage>
</organism>
<comment type="similarity">
    <text evidence="1">Belongs to the bacterial ribosomal protein bS16 family.</text>
</comment>
<protein>
    <recommendedName>
        <fullName evidence="1">Small ribosomal subunit protein bS16</fullName>
    </recommendedName>
    <alternativeName>
        <fullName evidence="2">30S ribosomal protein S16</fullName>
    </alternativeName>
</protein>
<sequence>MSIKIRLQRKGRKKKAFYTIVVSNSRSPRNGKFLEKIGFYNPNTNPYTISINVDKAVNWLIKGAQPTCTVKSFFLKEGIYYKKYLLSGVKISKSEIEQKLKAWKEKKIILHK</sequence>
<evidence type="ECO:0000255" key="1">
    <source>
        <dbReference type="HAMAP-Rule" id="MF_00385"/>
    </source>
</evidence>
<evidence type="ECO:0000305" key="2"/>
<gene>
    <name evidence="1" type="primary">rpsP</name>
    <name type="ordered locus">SMGWSS_206</name>
</gene>
<dbReference type="EMBL" id="CP000770">
    <property type="protein sequence ID" value="ABS30604.1"/>
    <property type="molecule type" value="Genomic_DNA"/>
</dbReference>
<dbReference type="SMR" id="A8Z653"/>
<dbReference type="STRING" id="444179.SMGWSS_206"/>
<dbReference type="KEGG" id="smg:SMGWSS_206"/>
<dbReference type="HOGENOM" id="CLU_100590_3_2_10"/>
<dbReference type="Proteomes" id="UP000000781">
    <property type="component" value="Chromosome"/>
</dbReference>
<dbReference type="GO" id="GO:0005737">
    <property type="term" value="C:cytoplasm"/>
    <property type="evidence" value="ECO:0007669"/>
    <property type="project" value="UniProtKB-ARBA"/>
</dbReference>
<dbReference type="GO" id="GO:0015935">
    <property type="term" value="C:small ribosomal subunit"/>
    <property type="evidence" value="ECO:0007669"/>
    <property type="project" value="TreeGrafter"/>
</dbReference>
<dbReference type="GO" id="GO:0003735">
    <property type="term" value="F:structural constituent of ribosome"/>
    <property type="evidence" value="ECO:0007669"/>
    <property type="project" value="InterPro"/>
</dbReference>
<dbReference type="GO" id="GO:0006412">
    <property type="term" value="P:translation"/>
    <property type="evidence" value="ECO:0007669"/>
    <property type="project" value="UniProtKB-UniRule"/>
</dbReference>
<dbReference type="Gene3D" id="3.30.1320.10">
    <property type="match status" value="1"/>
</dbReference>
<dbReference type="HAMAP" id="MF_00385">
    <property type="entry name" value="Ribosomal_bS16"/>
    <property type="match status" value="1"/>
</dbReference>
<dbReference type="InterPro" id="IPR000307">
    <property type="entry name" value="Ribosomal_bS16"/>
</dbReference>
<dbReference type="InterPro" id="IPR023803">
    <property type="entry name" value="Ribosomal_bS16_dom_sf"/>
</dbReference>
<dbReference type="NCBIfam" id="TIGR00002">
    <property type="entry name" value="S16"/>
    <property type="match status" value="1"/>
</dbReference>
<dbReference type="PANTHER" id="PTHR12919">
    <property type="entry name" value="30S RIBOSOMAL PROTEIN S16"/>
    <property type="match status" value="1"/>
</dbReference>
<dbReference type="PANTHER" id="PTHR12919:SF20">
    <property type="entry name" value="SMALL RIBOSOMAL SUBUNIT PROTEIN BS16M"/>
    <property type="match status" value="1"/>
</dbReference>
<dbReference type="Pfam" id="PF00886">
    <property type="entry name" value="Ribosomal_S16"/>
    <property type="match status" value="1"/>
</dbReference>
<dbReference type="SUPFAM" id="SSF54565">
    <property type="entry name" value="Ribosomal protein S16"/>
    <property type="match status" value="1"/>
</dbReference>
<feature type="chain" id="PRO_1000080177" description="Small ribosomal subunit protein bS16">
    <location>
        <begin position="1"/>
        <end position="112"/>
    </location>
</feature>
<keyword id="KW-0687">Ribonucleoprotein</keyword>
<keyword id="KW-0689">Ribosomal protein</keyword>
<accession>A8Z653</accession>
<name>RS16_KARMG</name>
<proteinExistence type="inferred from homology"/>
<reference key="1">
    <citation type="journal article" date="2007" name="Proc. Natl. Acad. Sci. U.S.A.">
        <title>Parallel genomic evolution and metabolic interdependence in an ancient symbiosis.</title>
        <authorList>
            <person name="McCutcheon J.P."/>
            <person name="Moran N.A."/>
        </authorList>
    </citation>
    <scope>NUCLEOTIDE SEQUENCE [LARGE SCALE GENOMIC DNA]</scope>
    <source>
        <strain>GWSS</strain>
    </source>
</reference>